<keyword id="KW-0963">Cytoplasm</keyword>
<keyword id="KW-0328">Glycosyltransferase</keyword>
<keyword id="KW-0660">Purine salvage</keyword>
<keyword id="KW-1185">Reference proteome</keyword>
<keyword id="KW-0808">Transferase</keyword>
<name>XPT_BACLD</name>
<gene>
    <name evidence="1" type="primary">xpt</name>
    <name type="ordered locus">BLi02348</name>
    <name type="ordered locus">BL00680</name>
</gene>
<dbReference type="EC" id="2.4.2.22" evidence="1"/>
<dbReference type="EMBL" id="CP000002">
    <property type="protein sequence ID" value="AAU23872.1"/>
    <property type="molecule type" value="Genomic_DNA"/>
</dbReference>
<dbReference type="EMBL" id="AE017333">
    <property type="protein sequence ID" value="AAU41228.1"/>
    <property type="molecule type" value="Genomic_DNA"/>
</dbReference>
<dbReference type="RefSeq" id="WP_003182865.1">
    <property type="nucleotide sequence ID" value="NC_006322.1"/>
</dbReference>
<dbReference type="SMR" id="Q65I86"/>
<dbReference type="STRING" id="279010.BL00680"/>
<dbReference type="GeneID" id="92861055"/>
<dbReference type="KEGG" id="bld:BLi02348"/>
<dbReference type="KEGG" id="bli:BL00680"/>
<dbReference type="eggNOG" id="COG0503">
    <property type="taxonomic scope" value="Bacteria"/>
</dbReference>
<dbReference type="HOGENOM" id="CLU_099015_0_0_9"/>
<dbReference type="UniPathway" id="UPA00602">
    <property type="reaction ID" value="UER00658"/>
</dbReference>
<dbReference type="Proteomes" id="UP000000606">
    <property type="component" value="Chromosome"/>
</dbReference>
<dbReference type="GO" id="GO:0005737">
    <property type="term" value="C:cytoplasm"/>
    <property type="evidence" value="ECO:0007669"/>
    <property type="project" value="UniProtKB-SubCell"/>
</dbReference>
<dbReference type="GO" id="GO:0000310">
    <property type="term" value="F:xanthine phosphoribosyltransferase activity"/>
    <property type="evidence" value="ECO:0007669"/>
    <property type="project" value="UniProtKB-UniRule"/>
</dbReference>
<dbReference type="GO" id="GO:0006166">
    <property type="term" value="P:purine ribonucleoside salvage"/>
    <property type="evidence" value="ECO:0007669"/>
    <property type="project" value="UniProtKB-KW"/>
</dbReference>
<dbReference type="GO" id="GO:0046110">
    <property type="term" value="P:xanthine metabolic process"/>
    <property type="evidence" value="ECO:0007669"/>
    <property type="project" value="InterPro"/>
</dbReference>
<dbReference type="GO" id="GO:0032265">
    <property type="term" value="P:XMP salvage"/>
    <property type="evidence" value="ECO:0007669"/>
    <property type="project" value="UniProtKB-UniRule"/>
</dbReference>
<dbReference type="CDD" id="cd06223">
    <property type="entry name" value="PRTases_typeI"/>
    <property type="match status" value="1"/>
</dbReference>
<dbReference type="FunFam" id="3.40.50.2020:FF:000027">
    <property type="entry name" value="Xanthine phosphoribosyltransferase"/>
    <property type="match status" value="1"/>
</dbReference>
<dbReference type="Gene3D" id="3.40.50.2020">
    <property type="match status" value="1"/>
</dbReference>
<dbReference type="HAMAP" id="MF_01184">
    <property type="entry name" value="XPRTase"/>
    <property type="match status" value="1"/>
</dbReference>
<dbReference type="InterPro" id="IPR000836">
    <property type="entry name" value="PRibTrfase_dom"/>
</dbReference>
<dbReference type="InterPro" id="IPR029057">
    <property type="entry name" value="PRTase-like"/>
</dbReference>
<dbReference type="InterPro" id="IPR050118">
    <property type="entry name" value="Pur/Pyrimidine_PRTase"/>
</dbReference>
<dbReference type="InterPro" id="IPR010079">
    <property type="entry name" value="Xanthine_PRibTrfase"/>
</dbReference>
<dbReference type="NCBIfam" id="NF006671">
    <property type="entry name" value="PRK09219.1"/>
    <property type="match status" value="1"/>
</dbReference>
<dbReference type="NCBIfam" id="TIGR01744">
    <property type="entry name" value="XPRTase"/>
    <property type="match status" value="1"/>
</dbReference>
<dbReference type="PANTHER" id="PTHR43864">
    <property type="entry name" value="HYPOXANTHINE/GUANINE PHOSPHORIBOSYLTRANSFERASE"/>
    <property type="match status" value="1"/>
</dbReference>
<dbReference type="PANTHER" id="PTHR43864:SF1">
    <property type="entry name" value="XANTHINE PHOSPHORIBOSYLTRANSFERASE"/>
    <property type="match status" value="1"/>
</dbReference>
<dbReference type="Pfam" id="PF00156">
    <property type="entry name" value="Pribosyltran"/>
    <property type="match status" value="1"/>
</dbReference>
<dbReference type="SUPFAM" id="SSF53271">
    <property type="entry name" value="PRTase-like"/>
    <property type="match status" value="1"/>
</dbReference>
<reference key="1">
    <citation type="journal article" date="2004" name="J. Mol. Microbiol. Biotechnol.">
        <title>The complete genome sequence of Bacillus licheniformis DSM13, an organism with great industrial potential.</title>
        <authorList>
            <person name="Veith B."/>
            <person name="Herzberg C."/>
            <person name="Steckel S."/>
            <person name="Feesche J."/>
            <person name="Maurer K.H."/>
            <person name="Ehrenreich P."/>
            <person name="Baeumer S."/>
            <person name="Henne A."/>
            <person name="Liesegang H."/>
            <person name="Merkl R."/>
            <person name="Ehrenreich A."/>
            <person name="Gottschalk G."/>
        </authorList>
    </citation>
    <scope>NUCLEOTIDE SEQUENCE [LARGE SCALE GENOMIC DNA]</scope>
    <source>
        <strain>ATCC 14580 / DSM 13 / JCM 2505 / CCUG 7422 / NBRC 12200 / NCIMB 9375 / NCTC 10341 / NRRL NRS-1264 / Gibson 46</strain>
    </source>
</reference>
<reference key="2">
    <citation type="journal article" date="2004" name="Genome Biol.">
        <title>Complete genome sequence of the industrial bacterium Bacillus licheniformis and comparisons with closely related Bacillus species.</title>
        <authorList>
            <person name="Rey M.W."/>
            <person name="Ramaiya P."/>
            <person name="Nelson B.A."/>
            <person name="Brody-Karpin S.D."/>
            <person name="Zaretsky E.J."/>
            <person name="Tang M."/>
            <person name="Lopez de Leon A."/>
            <person name="Xiang H."/>
            <person name="Gusti V."/>
            <person name="Clausen I.G."/>
            <person name="Olsen P.B."/>
            <person name="Rasmussen M.D."/>
            <person name="Andersen J.T."/>
            <person name="Joergensen P.L."/>
            <person name="Larsen T.S."/>
            <person name="Sorokin A."/>
            <person name="Bolotin A."/>
            <person name="Lapidus A."/>
            <person name="Galleron N."/>
            <person name="Ehrlich S.D."/>
            <person name="Berka R.M."/>
        </authorList>
    </citation>
    <scope>NUCLEOTIDE SEQUENCE [LARGE SCALE GENOMIC DNA]</scope>
    <source>
        <strain>ATCC 14580 / DSM 13 / JCM 2505 / CCUG 7422 / NBRC 12200 / NCIMB 9375 / NCTC 10341 / NRRL NRS-1264 / Gibson 46</strain>
    </source>
</reference>
<organism>
    <name type="scientific">Bacillus licheniformis (strain ATCC 14580 / DSM 13 / JCM 2505 / CCUG 7422 / NBRC 12200 / NCIMB 9375 / NCTC 10341 / NRRL NRS-1264 / Gibson 46)</name>
    <dbReference type="NCBI Taxonomy" id="279010"/>
    <lineage>
        <taxon>Bacteria</taxon>
        <taxon>Bacillati</taxon>
        <taxon>Bacillota</taxon>
        <taxon>Bacilli</taxon>
        <taxon>Bacillales</taxon>
        <taxon>Bacillaceae</taxon>
        <taxon>Bacillus</taxon>
    </lineage>
</organism>
<proteinExistence type="inferred from homology"/>
<sequence>MEKLKRKIAEQGTVLSDEVLKVDSFLNHQIDPELMLAVGEEFASLFREEGVTKIVTIESSGIAPAVMAGLKLGVPVVFARKRQSLTLTENLLTASVYSFTKKTESTVAVSASHLSKDDKVLIIDDFLANGQAAKGLVSIIEQAGAKVCGIGIVIEKSFQTGREELENLGIRVESLARIASLAGGKVTFLQEVGS</sequence>
<comment type="function">
    <text evidence="1">Converts the preformed base xanthine, a product of nucleic acid breakdown, to xanthosine 5'-monophosphate (XMP), so it can be reused for RNA or DNA synthesis.</text>
</comment>
<comment type="catalytic activity">
    <reaction evidence="1">
        <text>XMP + diphosphate = xanthine + 5-phospho-alpha-D-ribose 1-diphosphate</text>
        <dbReference type="Rhea" id="RHEA:10800"/>
        <dbReference type="ChEBI" id="CHEBI:17712"/>
        <dbReference type="ChEBI" id="CHEBI:33019"/>
        <dbReference type="ChEBI" id="CHEBI:57464"/>
        <dbReference type="ChEBI" id="CHEBI:58017"/>
        <dbReference type="EC" id="2.4.2.22"/>
    </reaction>
</comment>
<comment type="pathway">
    <text evidence="1">Purine metabolism; XMP biosynthesis via salvage pathway; XMP from xanthine: step 1/1.</text>
</comment>
<comment type="subunit">
    <text evidence="1">Homodimer.</text>
</comment>
<comment type="subcellular location">
    <subcellularLocation>
        <location evidence="1">Cytoplasm</location>
    </subcellularLocation>
</comment>
<comment type="similarity">
    <text evidence="1">Belongs to the purine/pyrimidine phosphoribosyltransferase family. Xpt subfamily.</text>
</comment>
<accession>Q65I86</accession>
<accession>Q62TN7</accession>
<feature type="chain" id="PRO_0000339666" description="Xanthine phosphoribosyltransferase">
    <location>
        <begin position="1"/>
        <end position="194"/>
    </location>
</feature>
<feature type="binding site" evidence="1">
    <location>
        <position position="20"/>
    </location>
    <ligand>
        <name>xanthine</name>
        <dbReference type="ChEBI" id="CHEBI:17712"/>
    </ligand>
</feature>
<feature type="binding site" evidence="1">
    <location>
        <position position="27"/>
    </location>
    <ligand>
        <name>xanthine</name>
        <dbReference type="ChEBI" id="CHEBI:17712"/>
    </ligand>
</feature>
<feature type="binding site" evidence="1">
    <location>
        <begin position="128"/>
        <end position="132"/>
    </location>
    <ligand>
        <name>5-phospho-alpha-D-ribose 1-diphosphate</name>
        <dbReference type="ChEBI" id="CHEBI:58017"/>
    </ligand>
</feature>
<feature type="binding site" evidence="1">
    <location>
        <position position="156"/>
    </location>
    <ligand>
        <name>xanthine</name>
        <dbReference type="ChEBI" id="CHEBI:17712"/>
    </ligand>
</feature>
<evidence type="ECO:0000255" key="1">
    <source>
        <dbReference type="HAMAP-Rule" id="MF_01184"/>
    </source>
</evidence>
<protein>
    <recommendedName>
        <fullName evidence="1">Xanthine phosphoribosyltransferase</fullName>
        <shortName evidence="1">XPRTase</shortName>
        <ecNumber evidence="1">2.4.2.22</ecNumber>
    </recommendedName>
</protein>